<reference key="1">
    <citation type="journal article" date="2011" name="Stand. Genomic Sci.">
        <title>Complete genome sequence of 'Thioalkalivibrio sulfidophilus' HL-EbGr7.</title>
        <authorList>
            <person name="Muyzer G."/>
            <person name="Sorokin D.Y."/>
            <person name="Mavromatis K."/>
            <person name="Lapidus A."/>
            <person name="Clum A."/>
            <person name="Ivanova N."/>
            <person name="Pati A."/>
            <person name="d'Haeseleer P."/>
            <person name="Woyke T."/>
            <person name="Kyrpides N.C."/>
        </authorList>
    </citation>
    <scope>NUCLEOTIDE SEQUENCE [LARGE SCALE GENOMIC DNA]</scope>
    <source>
        <strain>HL-EbGR7</strain>
    </source>
</reference>
<comment type="function">
    <text evidence="1">Catalyzes the reduction of the glycolytic intermediate dihydroxyacetone phosphate (DHAP) to sn-glycerol 3-phosphate (G3P), the key precursor for phospholipid synthesis.</text>
</comment>
<comment type="catalytic activity">
    <reaction evidence="1">
        <text>sn-glycerol 3-phosphate + NAD(+) = dihydroxyacetone phosphate + NADH + H(+)</text>
        <dbReference type="Rhea" id="RHEA:11092"/>
        <dbReference type="ChEBI" id="CHEBI:15378"/>
        <dbReference type="ChEBI" id="CHEBI:57540"/>
        <dbReference type="ChEBI" id="CHEBI:57597"/>
        <dbReference type="ChEBI" id="CHEBI:57642"/>
        <dbReference type="ChEBI" id="CHEBI:57945"/>
        <dbReference type="EC" id="1.1.1.94"/>
    </reaction>
    <physiologicalReaction direction="right-to-left" evidence="1">
        <dbReference type="Rhea" id="RHEA:11094"/>
    </physiologicalReaction>
</comment>
<comment type="catalytic activity">
    <reaction evidence="1">
        <text>sn-glycerol 3-phosphate + NADP(+) = dihydroxyacetone phosphate + NADPH + H(+)</text>
        <dbReference type="Rhea" id="RHEA:11096"/>
        <dbReference type="ChEBI" id="CHEBI:15378"/>
        <dbReference type="ChEBI" id="CHEBI:57597"/>
        <dbReference type="ChEBI" id="CHEBI:57642"/>
        <dbReference type="ChEBI" id="CHEBI:57783"/>
        <dbReference type="ChEBI" id="CHEBI:58349"/>
        <dbReference type="EC" id="1.1.1.94"/>
    </reaction>
    <physiologicalReaction direction="right-to-left" evidence="1">
        <dbReference type="Rhea" id="RHEA:11098"/>
    </physiologicalReaction>
</comment>
<comment type="pathway">
    <text evidence="1">Membrane lipid metabolism; glycerophospholipid metabolism.</text>
</comment>
<comment type="subcellular location">
    <subcellularLocation>
        <location evidence="1">Cytoplasm</location>
    </subcellularLocation>
</comment>
<comment type="similarity">
    <text evidence="1">Belongs to the NAD-dependent glycerol-3-phosphate dehydrogenase family.</text>
</comment>
<name>GPDA_THISH</name>
<protein>
    <recommendedName>
        <fullName evidence="1">Glycerol-3-phosphate dehydrogenase [NAD(P)+]</fullName>
        <ecNumber evidence="1">1.1.1.94</ecNumber>
    </recommendedName>
    <alternativeName>
        <fullName evidence="1">NAD(P)(+)-dependent glycerol-3-phosphate dehydrogenase</fullName>
    </alternativeName>
    <alternativeName>
        <fullName evidence="1">NAD(P)H-dependent dihydroxyacetone-phosphate reductase</fullName>
    </alternativeName>
</protein>
<proteinExistence type="inferred from homology"/>
<dbReference type="EC" id="1.1.1.94" evidence="1"/>
<dbReference type="EMBL" id="CP001339">
    <property type="protein sequence ID" value="ACL74348.1"/>
    <property type="molecule type" value="Genomic_DNA"/>
</dbReference>
<dbReference type="RefSeq" id="WP_012639810.1">
    <property type="nucleotide sequence ID" value="NC_011901.1"/>
</dbReference>
<dbReference type="SMR" id="B8GR94"/>
<dbReference type="STRING" id="396588.Tgr7_3281"/>
<dbReference type="KEGG" id="tgr:Tgr7_3281"/>
<dbReference type="eggNOG" id="COG0240">
    <property type="taxonomic scope" value="Bacteria"/>
</dbReference>
<dbReference type="HOGENOM" id="CLU_033449_0_2_6"/>
<dbReference type="OrthoDB" id="9812273at2"/>
<dbReference type="UniPathway" id="UPA00940"/>
<dbReference type="Proteomes" id="UP000002383">
    <property type="component" value="Chromosome"/>
</dbReference>
<dbReference type="GO" id="GO:0005829">
    <property type="term" value="C:cytosol"/>
    <property type="evidence" value="ECO:0007669"/>
    <property type="project" value="TreeGrafter"/>
</dbReference>
<dbReference type="GO" id="GO:0047952">
    <property type="term" value="F:glycerol-3-phosphate dehydrogenase [NAD(P)+] activity"/>
    <property type="evidence" value="ECO:0007669"/>
    <property type="project" value="UniProtKB-UniRule"/>
</dbReference>
<dbReference type="GO" id="GO:0051287">
    <property type="term" value="F:NAD binding"/>
    <property type="evidence" value="ECO:0007669"/>
    <property type="project" value="InterPro"/>
</dbReference>
<dbReference type="GO" id="GO:0005975">
    <property type="term" value="P:carbohydrate metabolic process"/>
    <property type="evidence" value="ECO:0007669"/>
    <property type="project" value="InterPro"/>
</dbReference>
<dbReference type="GO" id="GO:0046167">
    <property type="term" value="P:glycerol-3-phosphate biosynthetic process"/>
    <property type="evidence" value="ECO:0007669"/>
    <property type="project" value="UniProtKB-UniRule"/>
</dbReference>
<dbReference type="GO" id="GO:0046168">
    <property type="term" value="P:glycerol-3-phosphate catabolic process"/>
    <property type="evidence" value="ECO:0007669"/>
    <property type="project" value="InterPro"/>
</dbReference>
<dbReference type="GO" id="GO:0046474">
    <property type="term" value="P:glycerophospholipid biosynthetic process"/>
    <property type="evidence" value="ECO:0007669"/>
    <property type="project" value="TreeGrafter"/>
</dbReference>
<dbReference type="FunFam" id="1.10.1040.10:FF:000001">
    <property type="entry name" value="Glycerol-3-phosphate dehydrogenase [NAD(P)+]"/>
    <property type="match status" value="1"/>
</dbReference>
<dbReference type="FunFam" id="3.40.50.720:FF:000019">
    <property type="entry name" value="Glycerol-3-phosphate dehydrogenase [NAD(P)+]"/>
    <property type="match status" value="1"/>
</dbReference>
<dbReference type="Gene3D" id="1.10.1040.10">
    <property type="entry name" value="N-(1-d-carboxylethyl)-l-norvaline Dehydrogenase, domain 2"/>
    <property type="match status" value="1"/>
</dbReference>
<dbReference type="Gene3D" id="3.40.50.720">
    <property type="entry name" value="NAD(P)-binding Rossmann-like Domain"/>
    <property type="match status" value="1"/>
</dbReference>
<dbReference type="HAMAP" id="MF_00394">
    <property type="entry name" value="NAD_Glyc3P_dehydrog"/>
    <property type="match status" value="1"/>
</dbReference>
<dbReference type="InterPro" id="IPR008927">
    <property type="entry name" value="6-PGluconate_DH-like_C_sf"/>
</dbReference>
<dbReference type="InterPro" id="IPR013328">
    <property type="entry name" value="6PGD_dom2"/>
</dbReference>
<dbReference type="InterPro" id="IPR006168">
    <property type="entry name" value="G3P_DH_NAD-dep"/>
</dbReference>
<dbReference type="InterPro" id="IPR006109">
    <property type="entry name" value="G3P_DH_NAD-dep_C"/>
</dbReference>
<dbReference type="InterPro" id="IPR011128">
    <property type="entry name" value="G3P_DH_NAD-dep_N"/>
</dbReference>
<dbReference type="InterPro" id="IPR036291">
    <property type="entry name" value="NAD(P)-bd_dom_sf"/>
</dbReference>
<dbReference type="NCBIfam" id="NF000940">
    <property type="entry name" value="PRK00094.1-2"/>
    <property type="match status" value="1"/>
</dbReference>
<dbReference type="NCBIfam" id="NF000942">
    <property type="entry name" value="PRK00094.1-4"/>
    <property type="match status" value="1"/>
</dbReference>
<dbReference type="PANTHER" id="PTHR11728">
    <property type="entry name" value="GLYCEROL-3-PHOSPHATE DEHYDROGENASE"/>
    <property type="match status" value="1"/>
</dbReference>
<dbReference type="PANTHER" id="PTHR11728:SF1">
    <property type="entry name" value="GLYCEROL-3-PHOSPHATE DEHYDROGENASE [NAD(+)] 2, CHLOROPLASTIC"/>
    <property type="match status" value="1"/>
</dbReference>
<dbReference type="Pfam" id="PF07479">
    <property type="entry name" value="NAD_Gly3P_dh_C"/>
    <property type="match status" value="1"/>
</dbReference>
<dbReference type="Pfam" id="PF01210">
    <property type="entry name" value="NAD_Gly3P_dh_N"/>
    <property type="match status" value="1"/>
</dbReference>
<dbReference type="PIRSF" id="PIRSF000114">
    <property type="entry name" value="Glycerol-3-P_dh"/>
    <property type="match status" value="1"/>
</dbReference>
<dbReference type="PRINTS" id="PR00077">
    <property type="entry name" value="GPDHDRGNASE"/>
</dbReference>
<dbReference type="SUPFAM" id="SSF48179">
    <property type="entry name" value="6-phosphogluconate dehydrogenase C-terminal domain-like"/>
    <property type="match status" value="1"/>
</dbReference>
<dbReference type="SUPFAM" id="SSF51735">
    <property type="entry name" value="NAD(P)-binding Rossmann-fold domains"/>
    <property type="match status" value="1"/>
</dbReference>
<dbReference type="PROSITE" id="PS00957">
    <property type="entry name" value="NAD_G3PDH"/>
    <property type="match status" value="1"/>
</dbReference>
<accession>B8GR94</accession>
<evidence type="ECO:0000255" key="1">
    <source>
        <dbReference type="HAMAP-Rule" id="MF_00394"/>
    </source>
</evidence>
<sequence>MSQPPVAVLGAGSWGTALAMHLARQGHRVRLWGRDPEAMAAMAEANCNTRYLPDAPFPPGLEPTADLDAALRESSCWLVVVPSQAFREMLQKLAPYRDDARVLVWATKGLEEHSGQWLHQVVAEEMGVNFPCAVISGPSFAKEVARGLPTALTVASTTPGVAERVAEWFHGERMRVYLSDDVLGVQLGGAFKNVLAIAAGISDGLGFGANARAALITRGLAELMRLGDAAGARRETLMGLSGLGDLVLTCTDDQSRNRRLGLALGRGESLDAALAAIGQAVEGARTARMAVSKAAELGVDMPICHQVHRVLYVGHSAIEAVGELLGRDQKPEF</sequence>
<gene>
    <name evidence="1" type="primary">gpsA</name>
    <name type="ordered locus">Tgr7_3281</name>
</gene>
<feature type="chain" id="PRO_1000190180" description="Glycerol-3-phosphate dehydrogenase [NAD(P)+]">
    <location>
        <begin position="1"/>
        <end position="333"/>
    </location>
</feature>
<feature type="active site" description="Proton acceptor" evidence="1">
    <location>
        <position position="192"/>
    </location>
</feature>
<feature type="binding site" evidence="1">
    <location>
        <position position="13"/>
    </location>
    <ligand>
        <name>NADPH</name>
        <dbReference type="ChEBI" id="CHEBI:57783"/>
    </ligand>
</feature>
<feature type="binding site" evidence="1">
    <location>
        <position position="14"/>
    </location>
    <ligand>
        <name>NADPH</name>
        <dbReference type="ChEBI" id="CHEBI:57783"/>
    </ligand>
</feature>
<feature type="binding site" evidence="1">
    <location>
        <position position="34"/>
    </location>
    <ligand>
        <name>NADPH</name>
        <dbReference type="ChEBI" id="CHEBI:57783"/>
    </ligand>
</feature>
<feature type="binding site" evidence="1">
    <location>
        <position position="108"/>
    </location>
    <ligand>
        <name>NADPH</name>
        <dbReference type="ChEBI" id="CHEBI:57783"/>
    </ligand>
</feature>
<feature type="binding site" evidence="1">
    <location>
        <position position="108"/>
    </location>
    <ligand>
        <name>sn-glycerol 3-phosphate</name>
        <dbReference type="ChEBI" id="CHEBI:57597"/>
    </ligand>
</feature>
<feature type="binding site" evidence="1">
    <location>
        <position position="137"/>
    </location>
    <ligand>
        <name>sn-glycerol 3-phosphate</name>
        <dbReference type="ChEBI" id="CHEBI:57597"/>
    </ligand>
</feature>
<feature type="binding site" evidence="1">
    <location>
        <position position="139"/>
    </location>
    <ligand>
        <name>sn-glycerol 3-phosphate</name>
        <dbReference type="ChEBI" id="CHEBI:57597"/>
    </ligand>
</feature>
<feature type="binding site" evidence="1">
    <location>
        <position position="141"/>
    </location>
    <ligand>
        <name>NADPH</name>
        <dbReference type="ChEBI" id="CHEBI:57783"/>
    </ligand>
</feature>
<feature type="binding site" evidence="1">
    <location>
        <position position="192"/>
    </location>
    <ligand>
        <name>sn-glycerol 3-phosphate</name>
        <dbReference type="ChEBI" id="CHEBI:57597"/>
    </ligand>
</feature>
<feature type="binding site" evidence="1">
    <location>
        <position position="245"/>
    </location>
    <ligand>
        <name>sn-glycerol 3-phosphate</name>
        <dbReference type="ChEBI" id="CHEBI:57597"/>
    </ligand>
</feature>
<feature type="binding site" evidence="1">
    <location>
        <position position="255"/>
    </location>
    <ligand>
        <name>sn-glycerol 3-phosphate</name>
        <dbReference type="ChEBI" id="CHEBI:57597"/>
    </ligand>
</feature>
<feature type="binding site" evidence="1">
    <location>
        <position position="256"/>
    </location>
    <ligand>
        <name>NADPH</name>
        <dbReference type="ChEBI" id="CHEBI:57783"/>
    </ligand>
</feature>
<feature type="binding site" evidence="1">
    <location>
        <position position="256"/>
    </location>
    <ligand>
        <name>sn-glycerol 3-phosphate</name>
        <dbReference type="ChEBI" id="CHEBI:57597"/>
    </ligand>
</feature>
<feature type="binding site" evidence="1">
    <location>
        <position position="257"/>
    </location>
    <ligand>
        <name>sn-glycerol 3-phosphate</name>
        <dbReference type="ChEBI" id="CHEBI:57597"/>
    </ligand>
</feature>
<feature type="binding site" evidence="1">
    <location>
        <position position="282"/>
    </location>
    <ligand>
        <name>NADPH</name>
        <dbReference type="ChEBI" id="CHEBI:57783"/>
    </ligand>
</feature>
<keyword id="KW-0963">Cytoplasm</keyword>
<keyword id="KW-0444">Lipid biosynthesis</keyword>
<keyword id="KW-0443">Lipid metabolism</keyword>
<keyword id="KW-0520">NAD</keyword>
<keyword id="KW-0521">NADP</keyword>
<keyword id="KW-0547">Nucleotide-binding</keyword>
<keyword id="KW-0560">Oxidoreductase</keyword>
<keyword id="KW-0594">Phospholipid biosynthesis</keyword>
<keyword id="KW-1208">Phospholipid metabolism</keyword>
<keyword id="KW-1185">Reference proteome</keyword>
<organism>
    <name type="scientific">Thioalkalivibrio sulfidiphilus (strain HL-EbGR7)</name>
    <dbReference type="NCBI Taxonomy" id="396588"/>
    <lineage>
        <taxon>Bacteria</taxon>
        <taxon>Pseudomonadati</taxon>
        <taxon>Pseudomonadota</taxon>
        <taxon>Gammaproteobacteria</taxon>
        <taxon>Chromatiales</taxon>
        <taxon>Ectothiorhodospiraceae</taxon>
        <taxon>Thioalkalivibrio</taxon>
    </lineage>
</organism>